<organism>
    <name type="scientific">Escherichia coli (strain K12)</name>
    <dbReference type="NCBI Taxonomy" id="83333"/>
    <lineage>
        <taxon>Bacteria</taxon>
        <taxon>Pseudomonadati</taxon>
        <taxon>Pseudomonadota</taxon>
        <taxon>Gammaproteobacteria</taxon>
        <taxon>Enterobacterales</taxon>
        <taxon>Enterobacteriaceae</taxon>
        <taxon>Escherichia</taxon>
    </lineage>
</organism>
<accession>P0A8R9</accession>
<accession>P22788</accession>
<accession>P27826</accession>
<accession>Q2M874</accession>
<accession>Q9KHQ8</accession>
<evidence type="ECO:0000250" key="1"/>
<evidence type="ECO:0000269" key="2">
    <source>
    </source>
</evidence>
<evidence type="ECO:0000305" key="3"/>
<evidence type="ECO:0000305" key="4">
    <source>
    </source>
</evidence>
<comment type="function">
    <text evidence="2">Negatively regulates the transcription of the flagellar master operon flhDC by binding to the upstream region of the operon.</text>
</comment>
<comment type="miscellaneous">
    <text>The expression of the hdfR gene is negatively regulated by H-NS.</text>
</comment>
<comment type="similarity">
    <text evidence="3">Belongs to the LysR transcriptional regulatory family.</text>
</comment>
<comment type="caution">
    <text evidence="4">Was originally thought to be involved in the expression of the phosphatidylserine synthetase pssA.</text>
</comment>
<comment type="sequence caution" evidence="3">
    <conflict type="frameshift">
        <sequence resource="EMBL-CDS" id="AAA24611"/>
    </conflict>
</comment>
<comment type="sequence caution" evidence="3">
    <conflict type="frameshift">
        <sequence resource="EMBL-CDS" id="AAA67566"/>
    </conflict>
    <text>Produces two separate ORFs.</text>
</comment>
<comment type="sequence caution" evidence="3">
    <conflict type="frameshift">
        <sequence resource="EMBL-CDS" id="AAA67567"/>
    </conflict>
    <text>Produces two separate ORFs.</text>
</comment>
<sequence>MDTELLKTFLEVSRTRHFGRAAESLYLTQSAVSFRIRQLENQLGVNLFTRHRNNIRLTAAGEKLLPYAETLMSTWQAARKEVAHTSRHNEFSIGASASLWECMLNQWLGRLYQNQDAHTGLQFEARIAQRQSLVKQLHERQLDLLITTEAPKMDEFSSQLLGYFTLALYTSAPSKLKGDLNYLRLEWGPDFQQHEAGLIGADEVPILTTSSAELAQQQIAMLNGCTWLPVSWARKKGGLHTVVDSTTLSRPLYAIWLQNSDKNALIRDLLKINVLDEVY</sequence>
<name>HDFR_ECOLI</name>
<dbReference type="EMBL" id="M37337">
    <property type="protein sequence ID" value="AAA24611.1"/>
    <property type="status" value="ALT_FRAME"/>
    <property type="molecule type" value="Genomic_DNA"/>
</dbReference>
<dbReference type="EMBL" id="AF251030">
    <property type="protein sequence ID" value="AAF97915.1"/>
    <property type="molecule type" value="Genomic_DNA"/>
</dbReference>
<dbReference type="EMBL" id="M87049">
    <property type="protein sequence ID" value="AAA67567.1"/>
    <property type="status" value="ALT_FRAME"/>
    <property type="molecule type" value="Genomic_DNA"/>
</dbReference>
<dbReference type="EMBL" id="M87049">
    <property type="protein sequence ID" value="AAA67566.1"/>
    <property type="status" value="ALT_FRAME"/>
    <property type="molecule type" value="Genomic_DNA"/>
</dbReference>
<dbReference type="EMBL" id="U00096">
    <property type="protein sequence ID" value="AAT48206.1"/>
    <property type="molecule type" value="Genomic_DNA"/>
</dbReference>
<dbReference type="EMBL" id="AP009048">
    <property type="protein sequence ID" value="BAE77532.1"/>
    <property type="molecule type" value="Genomic_DNA"/>
</dbReference>
<dbReference type="PIR" id="E65179">
    <property type="entry name" value="E65179"/>
</dbReference>
<dbReference type="RefSeq" id="WP_000379245.1">
    <property type="nucleotide sequence ID" value="NZ_SSZK01000025.1"/>
</dbReference>
<dbReference type="RefSeq" id="YP_026246.1">
    <property type="nucleotide sequence ID" value="NC_000913.3"/>
</dbReference>
<dbReference type="SMR" id="P0A8R9"/>
<dbReference type="BioGRID" id="4261482">
    <property type="interactions" value="98"/>
</dbReference>
<dbReference type="BioGRID" id="853448">
    <property type="interactions" value="5"/>
</dbReference>
<dbReference type="DIP" id="DIP-48185N"/>
<dbReference type="FunCoup" id="P0A8R9">
    <property type="interactions" value="47"/>
</dbReference>
<dbReference type="IntAct" id="P0A8R9">
    <property type="interactions" value="5"/>
</dbReference>
<dbReference type="STRING" id="511145.b4480"/>
<dbReference type="jPOST" id="P0A8R9"/>
<dbReference type="PaxDb" id="511145-b4480"/>
<dbReference type="EnsemblBacteria" id="AAT48206">
    <property type="protein sequence ID" value="AAT48206"/>
    <property type="gene ID" value="b4480"/>
</dbReference>
<dbReference type="GeneID" id="2847698"/>
<dbReference type="GeneID" id="93778187"/>
<dbReference type="KEGG" id="ecj:JW5607"/>
<dbReference type="KEGG" id="eco:b4480"/>
<dbReference type="KEGG" id="ecoc:C3026_20390"/>
<dbReference type="PATRIC" id="fig|1411691.4.peg.2944"/>
<dbReference type="EchoBASE" id="EB1418"/>
<dbReference type="eggNOG" id="COG0583">
    <property type="taxonomic scope" value="Bacteria"/>
</dbReference>
<dbReference type="HOGENOM" id="CLU_039613_8_2_6"/>
<dbReference type="InParanoid" id="P0A8R9"/>
<dbReference type="OMA" id="ESLMNTW"/>
<dbReference type="OrthoDB" id="9786526at2"/>
<dbReference type="PhylomeDB" id="P0A8R9"/>
<dbReference type="BioCyc" id="EcoCyc:EG11449-MONOMER"/>
<dbReference type="PRO" id="PR:P0A8R9"/>
<dbReference type="Proteomes" id="UP000000625">
    <property type="component" value="Chromosome"/>
</dbReference>
<dbReference type="GO" id="GO:0003677">
    <property type="term" value="F:DNA binding"/>
    <property type="evidence" value="ECO:0007669"/>
    <property type="project" value="UniProtKB-KW"/>
</dbReference>
<dbReference type="GO" id="GO:0003700">
    <property type="term" value="F:DNA-binding transcription factor activity"/>
    <property type="evidence" value="ECO:0000314"/>
    <property type="project" value="EcoCyc"/>
</dbReference>
<dbReference type="GO" id="GO:0045892">
    <property type="term" value="P:negative regulation of DNA-templated transcription"/>
    <property type="evidence" value="ECO:0000314"/>
    <property type="project" value="EcoCyc"/>
</dbReference>
<dbReference type="GO" id="GO:0006355">
    <property type="term" value="P:regulation of DNA-templated transcription"/>
    <property type="evidence" value="ECO:0000318"/>
    <property type="project" value="GO_Central"/>
</dbReference>
<dbReference type="FunFam" id="1.10.10.10:FF:000001">
    <property type="entry name" value="LysR family transcriptional regulator"/>
    <property type="match status" value="1"/>
</dbReference>
<dbReference type="Gene3D" id="3.40.190.10">
    <property type="entry name" value="Periplasmic binding protein-like II"/>
    <property type="match status" value="2"/>
</dbReference>
<dbReference type="Gene3D" id="1.10.10.10">
    <property type="entry name" value="Winged helix-like DNA-binding domain superfamily/Winged helix DNA-binding domain"/>
    <property type="match status" value="1"/>
</dbReference>
<dbReference type="HAMAP" id="MF_01233">
    <property type="entry name" value="HTH_type_HdfR"/>
    <property type="match status" value="1"/>
</dbReference>
<dbReference type="InterPro" id="IPR050176">
    <property type="entry name" value="LTTR"/>
</dbReference>
<dbReference type="InterPro" id="IPR005119">
    <property type="entry name" value="LysR_subst-bd"/>
</dbReference>
<dbReference type="InterPro" id="IPR020890">
    <property type="entry name" value="Tscrpt_reg_HTH_HdfR"/>
</dbReference>
<dbReference type="InterPro" id="IPR000847">
    <property type="entry name" value="Tscrpt_reg_HTH_LysR"/>
</dbReference>
<dbReference type="InterPro" id="IPR036388">
    <property type="entry name" value="WH-like_DNA-bd_sf"/>
</dbReference>
<dbReference type="InterPro" id="IPR036390">
    <property type="entry name" value="WH_DNA-bd_sf"/>
</dbReference>
<dbReference type="NCBIfam" id="NF002946">
    <property type="entry name" value="PRK03601.1"/>
    <property type="match status" value="1"/>
</dbReference>
<dbReference type="PANTHER" id="PTHR30579:SF8">
    <property type="entry name" value="HTH-TYPE TRANSCRIPTIONAL REGULATOR HDFR"/>
    <property type="match status" value="1"/>
</dbReference>
<dbReference type="PANTHER" id="PTHR30579">
    <property type="entry name" value="TRANSCRIPTIONAL REGULATOR"/>
    <property type="match status" value="1"/>
</dbReference>
<dbReference type="Pfam" id="PF00126">
    <property type="entry name" value="HTH_1"/>
    <property type="match status" value="1"/>
</dbReference>
<dbReference type="Pfam" id="PF03466">
    <property type="entry name" value="LysR_substrate"/>
    <property type="match status" value="1"/>
</dbReference>
<dbReference type="PRINTS" id="PR00039">
    <property type="entry name" value="HTHLYSR"/>
</dbReference>
<dbReference type="SUPFAM" id="SSF53850">
    <property type="entry name" value="Periplasmic binding protein-like II"/>
    <property type="match status" value="1"/>
</dbReference>
<dbReference type="SUPFAM" id="SSF46785">
    <property type="entry name" value="Winged helix' DNA-binding domain"/>
    <property type="match status" value="1"/>
</dbReference>
<dbReference type="PROSITE" id="PS50931">
    <property type="entry name" value="HTH_LYSR"/>
    <property type="match status" value="1"/>
</dbReference>
<proteinExistence type="inferred from homology"/>
<keyword id="KW-0238">DNA-binding</keyword>
<keyword id="KW-1185">Reference proteome</keyword>
<keyword id="KW-0678">Repressor</keyword>
<keyword id="KW-0804">Transcription</keyword>
<keyword id="KW-0805">Transcription regulation</keyword>
<feature type="chain" id="PRO_0000105632" description="HTH-type transcriptional regulator HdfR">
    <location>
        <begin position="1"/>
        <end position="279"/>
    </location>
</feature>
<feature type="domain" description="HTH lysR-type">
    <location>
        <begin position="1"/>
        <end position="58"/>
    </location>
</feature>
<feature type="DNA-binding region" description="H-T-H motif" evidence="1">
    <location>
        <begin position="18"/>
        <end position="37"/>
    </location>
</feature>
<reference key="1">
    <citation type="journal article" date="1991" name="Gene">
        <title>Sequence and transcriptional activity of the Escherichia coli K-12 chromosome region between rrnC and ilvGMEDA.</title>
        <authorList>
            <person name="Coppola G."/>
            <person name="Huang F."/>
            <person name="Riley J."/>
            <person name="Cox J.L."/>
            <person name="Hantzopoulos P."/>
            <person name="Zhou L.-B."/>
            <person name="Calhoun D.H."/>
        </authorList>
    </citation>
    <scope>NUCLEOTIDE SEQUENCE [GENOMIC DNA]</scope>
    <source>
        <strain>K12</strain>
    </source>
</reference>
<reference key="2">
    <citation type="journal article" date="2000" name="J. Bacteriol.">
        <title>H-NS-dependent regulation of flagellar synthesis is mediated by a LysR family protein.</title>
        <authorList>
            <person name="Ko M."/>
            <person name="Park C."/>
        </authorList>
    </citation>
    <scope>NUCLEOTIDE SEQUENCE [GENOMIC DNA]</scope>
    <scope>FUNCTION</scope>
    <source>
        <strain>K12</strain>
    </source>
</reference>
<reference key="3">
    <citation type="journal article" date="1992" name="Science">
        <title>Analysis of the Escherichia coli genome: DNA sequence of the region from 84.5 to 86.5 minutes.</title>
        <authorList>
            <person name="Daniels D.L."/>
            <person name="Plunkett G. III"/>
            <person name="Burland V.D."/>
            <person name="Blattner F.R."/>
        </authorList>
    </citation>
    <scope>NUCLEOTIDE SEQUENCE [LARGE SCALE GENOMIC DNA]</scope>
    <source>
        <strain>K12 / MG1655 / ATCC 47076</strain>
    </source>
</reference>
<reference key="4">
    <citation type="journal article" date="1997" name="Science">
        <title>The complete genome sequence of Escherichia coli K-12.</title>
        <authorList>
            <person name="Blattner F.R."/>
            <person name="Plunkett G. III"/>
            <person name="Bloch C.A."/>
            <person name="Perna N.T."/>
            <person name="Burland V."/>
            <person name="Riley M."/>
            <person name="Collado-Vides J."/>
            <person name="Glasner J.D."/>
            <person name="Rode C.K."/>
            <person name="Mayhew G.F."/>
            <person name="Gregor J."/>
            <person name="Davis N.W."/>
            <person name="Kirkpatrick H.A."/>
            <person name="Goeden M.A."/>
            <person name="Rose D.J."/>
            <person name="Mau B."/>
            <person name="Shao Y."/>
        </authorList>
    </citation>
    <scope>NUCLEOTIDE SEQUENCE [LARGE SCALE GENOMIC DNA]</scope>
    <source>
        <strain>K12 / MG1655 / ATCC 47076</strain>
    </source>
</reference>
<reference key="5">
    <citation type="journal article" date="2006" name="Nucleic Acids Res.">
        <title>Escherichia coli K-12: a cooperatively developed annotation snapshot -- 2005.</title>
        <authorList>
            <person name="Riley M."/>
            <person name="Abe T."/>
            <person name="Arnaud M.B."/>
            <person name="Berlyn M.K.B."/>
            <person name="Blattner F.R."/>
            <person name="Chaudhuri R.R."/>
            <person name="Glasner J.D."/>
            <person name="Horiuchi T."/>
            <person name="Keseler I.M."/>
            <person name="Kosuge T."/>
            <person name="Mori H."/>
            <person name="Perna N.T."/>
            <person name="Plunkett G. III"/>
            <person name="Rudd K.E."/>
            <person name="Serres M.H."/>
            <person name="Thomas G.H."/>
            <person name="Thomson N.R."/>
            <person name="Wishart D."/>
            <person name="Wanner B.L."/>
        </authorList>
    </citation>
    <scope>SEQUENCE REVISION</scope>
</reference>
<reference key="6">
    <citation type="journal article" date="2006" name="Mol. Syst. Biol.">
        <title>Highly accurate genome sequences of Escherichia coli K-12 strains MG1655 and W3110.</title>
        <authorList>
            <person name="Hayashi K."/>
            <person name="Morooka N."/>
            <person name="Yamamoto Y."/>
            <person name="Fujita K."/>
            <person name="Isono K."/>
            <person name="Choi S."/>
            <person name="Ohtsubo E."/>
            <person name="Baba T."/>
            <person name="Wanner B.L."/>
            <person name="Mori H."/>
            <person name="Horiuchi T."/>
        </authorList>
    </citation>
    <scope>NUCLEOTIDE SEQUENCE [LARGE SCALE GENOMIC DNA]</scope>
    <source>
        <strain>K12 / W3110 / ATCC 27325 / DSM 5911</strain>
    </source>
</reference>
<reference key="7">
    <citation type="journal article" date="1983" name="J. Biol. Chem.">
        <title>A trans-acting regulatory mutation that causes overproduction of phosphatidylserine synthase in Escherichia coli.</title>
        <authorList>
            <person name="Sparrow C.P."/>
            <person name="Raetz C.R.H."/>
        </authorList>
    </citation>
    <scope>PRELIMINARY FUNCTION</scope>
</reference>
<protein>
    <recommendedName>
        <fullName>HTH-type transcriptional regulator HdfR</fullName>
    </recommendedName>
    <alternativeName>
        <fullName>H-NS-dependent flhDC regulator</fullName>
    </alternativeName>
</protein>
<gene>
    <name type="primary">hdfR</name>
    <name type="synonym">pssR</name>
    <name type="synonym">yifA</name>
    <name type="synonym">yifD</name>
    <name type="ordered locus">b4480</name>
    <name type="ordered locus">JW5607</name>
</gene>